<gene>
    <name type="primary">AP1A</name>
    <name type="ORF">BoB048N13.040</name>
</gene>
<proteinExistence type="inferred from homology"/>
<dbReference type="EMBL" id="EU642506">
    <property type="protein sequence ID" value="ACG60688.1"/>
    <property type="molecule type" value="Genomic_DNA"/>
</dbReference>
<dbReference type="SMR" id="B4YPW6"/>
<dbReference type="GO" id="GO:0005634">
    <property type="term" value="C:nucleus"/>
    <property type="evidence" value="ECO:0007669"/>
    <property type="project" value="UniProtKB-SubCell"/>
</dbReference>
<dbReference type="GO" id="GO:0003700">
    <property type="term" value="F:DNA-binding transcription factor activity"/>
    <property type="evidence" value="ECO:0007669"/>
    <property type="project" value="InterPro"/>
</dbReference>
<dbReference type="GO" id="GO:0046983">
    <property type="term" value="F:protein dimerization activity"/>
    <property type="evidence" value="ECO:0007669"/>
    <property type="project" value="InterPro"/>
</dbReference>
<dbReference type="GO" id="GO:0000977">
    <property type="term" value="F:RNA polymerase II transcription regulatory region sequence-specific DNA binding"/>
    <property type="evidence" value="ECO:0007669"/>
    <property type="project" value="InterPro"/>
</dbReference>
<dbReference type="GO" id="GO:0030154">
    <property type="term" value="P:cell differentiation"/>
    <property type="evidence" value="ECO:0007669"/>
    <property type="project" value="UniProtKB-KW"/>
</dbReference>
<dbReference type="GO" id="GO:0009908">
    <property type="term" value="P:flower development"/>
    <property type="evidence" value="ECO:0007669"/>
    <property type="project" value="UniProtKB-KW"/>
</dbReference>
<dbReference type="GO" id="GO:0045944">
    <property type="term" value="P:positive regulation of transcription by RNA polymerase II"/>
    <property type="evidence" value="ECO:0007669"/>
    <property type="project" value="InterPro"/>
</dbReference>
<dbReference type="CDD" id="cd00265">
    <property type="entry name" value="MADS_MEF2_like"/>
    <property type="match status" value="1"/>
</dbReference>
<dbReference type="FunFam" id="3.40.1810.10:FF:000003">
    <property type="entry name" value="MADS-box transcription factor MADS-MC"/>
    <property type="match status" value="1"/>
</dbReference>
<dbReference type="Gene3D" id="3.40.1810.10">
    <property type="entry name" value="Transcription factor, MADS-box"/>
    <property type="match status" value="1"/>
</dbReference>
<dbReference type="InterPro" id="IPR050142">
    <property type="entry name" value="MADS-box/MEF2_TF"/>
</dbReference>
<dbReference type="InterPro" id="IPR033896">
    <property type="entry name" value="MEF2-like_N"/>
</dbReference>
<dbReference type="InterPro" id="IPR002487">
    <property type="entry name" value="TF_Kbox"/>
</dbReference>
<dbReference type="InterPro" id="IPR002100">
    <property type="entry name" value="TF_MADSbox"/>
</dbReference>
<dbReference type="InterPro" id="IPR036879">
    <property type="entry name" value="TF_MADSbox_sf"/>
</dbReference>
<dbReference type="PANTHER" id="PTHR48019">
    <property type="entry name" value="SERUM RESPONSE FACTOR HOMOLOG"/>
    <property type="match status" value="1"/>
</dbReference>
<dbReference type="Pfam" id="PF01486">
    <property type="entry name" value="K-box"/>
    <property type="match status" value="1"/>
</dbReference>
<dbReference type="Pfam" id="PF00319">
    <property type="entry name" value="SRF-TF"/>
    <property type="match status" value="1"/>
</dbReference>
<dbReference type="PRINTS" id="PR00404">
    <property type="entry name" value="MADSDOMAIN"/>
</dbReference>
<dbReference type="SMART" id="SM00432">
    <property type="entry name" value="MADS"/>
    <property type="match status" value="1"/>
</dbReference>
<dbReference type="SUPFAM" id="SSF55455">
    <property type="entry name" value="SRF-like"/>
    <property type="match status" value="1"/>
</dbReference>
<dbReference type="PROSITE" id="PS51297">
    <property type="entry name" value="K_BOX"/>
    <property type="match status" value="1"/>
</dbReference>
<dbReference type="PROSITE" id="PS00350">
    <property type="entry name" value="MADS_BOX_1"/>
    <property type="match status" value="1"/>
</dbReference>
<dbReference type="PROSITE" id="PS50066">
    <property type="entry name" value="MADS_BOX_2"/>
    <property type="match status" value="1"/>
</dbReference>
<keyword id="KW-0010">Activator</keyword>
<keyword id="KW-0175">Coiled coil</keyword>
<keyword id="KW-0217">Developmental protein</keyword>
<keyword id="KW-0221">Differentiation</keyword>
<keyword id="KW-0238">DNA-binding</keyword>
<keyword id="KW-0287">Flowering</keyword>
<keyword id="KW-0539">Nucleus</keyword>
<keyword id="KW-0804">Transcription</keyword>
<keyword id="KW-0805">Transcription regulation</keyword>
<accession>B4YPW6</accession>
<name>AP1A_BRAOA</name>
<feature type="chain" id="PRO_0000417131" description="Floral homeotic protein APETALA 1 A">
    <location>
        <begin position="1"/>
        <end position="256"/>
    </location>
</feature>
<feature type="domain" description="MADS-box" evidence="2">
    <location>
        <begin position="1"/>
        <end position="61"/>
    </location>
</feature>
<feature type="domain" description="K-box" evidence="3">
    <location>
        <begin position="88"/>
        <end position="178"/>
    </location>
</feature>
<feature type="region of interest" description="Disordered" evidence="4">
    <location>
        <begin position="187"/>
        <end position="206"/>
    </location>
</feature>
<comment type="function">
    <text evidence="1">Transcription factor that promotes early floral meristem identity in synergy with LEAFY. Displays a redundant function with CAULIFLOWER in the up-regulation of LEAFY. Required subsequently for the transition of an inflorescence meristem into a floral meristem, and for the normal development of sepals and petals in flowers. Regulates positively B class homeotic proteins (By similarity).</text>
</comment>
<comment type="subunit">
    <text evidence="1">Homodimer capable of binding to CArG-box sequences.</text>
</comment>
<comment type="subcellular location">
    <subcellularLocation>
        <location evidence="2">Nucleus</location>
    </subcellularLocation>
</comment>
<organism>
    <name type="scientific">Brassica oleracea var. alboglabra</name>
    <name type="common">Chinese kale</name>
    <name type="synonym">Brassica alboglabra</name>
    <dbReference type="NCBI Taxonomy" id="3714"/>
    <lineage>
        <taxon>Eukaryota</taxon>
        <taxon>Viridiplantae</taxon>
        <taxon>Streptophyta</taxon>
        <taxon>Embryophyta</taxon>
        <taxon>Tracheophyta</taxon>
        <taxon>Spermatophyta</taxon>
        <taxon>Magnoliopsida</taxon>
        <taxon>eudicotyledons</taxon>
        <taxon>Gunneridae</taxon>
        <taxon>Pentapetalae</taxon>
        <taxon>rosids</taxon>
        <taxon>malvids</taxon>
        <taxon>Brassicales</taxon>
        <taxon>Brassicaceae</taxon>
        <taxon>Brassiceae</taxon>
        <taxon>Brassica</taxon>
    </lineage>
</organism>
<evidence type="ECO:0000250" key="1"/>
<evidence type="ECO:0000255" key="2">
    <source>
        <dbReference type="PROSITE-ProRule" id="PRU00251"/>
    </source>
</evidence>
<evidence type="ECO:0000255" key="3">
    <source>
        <dbReference type="PROSITE-ProRule" id="PRU00629"/>
    </source>
</evidence>
<evidence type="ECO:0000256" key="4">
    <source>
        <dbReference type="SAM" id="MobiDB-lite"/>
    </source>
</evidence>
<protein>
    <recommendedName>
        <fullName>Floral homeotic protein APETALA 1 A</fullName>
        <shortName>BoaAP1-a</shortName>
    </recommendedName>
    <alternativeName>
        <fullName>Agamous-like MADS-box protein AP1-A</fullName>
    </alternativeName>
</protein>
<sequence length="256" mass="30171">MGRGRVQLKRIENKINRQVTFSKRRAGLMKKAHEISVLCDAEVALVVFSHKGKLFEYSTDSCMEKILERYERYSYAERQLIAPESDSNTNWSMEYNRLKAKIELLERNQRHYLGEDLQAMSPKELQNLEQQLDTALKHIRSRKNQLMYDSINELQRKEKAIQEQNSMLSKQIKERENVLRAQQEQWDEQNHGHNMPPPPPPQQHQIQHPYMLSHQPSPFLNMGGLYQEEDQMAMRRNDLDLSLEPVYNCNLGCFAA</sequence>
<reference key="1">
    <citation type="submission" date="2008-04" db="EMBL/GenBank/DDBJ databases">
        <title>Long range sequence analysis of chromosome regions flanking triplicated BoAP1 loci in Brassica oleracea.</title>
        <authorList>
            <person name="Barker G.C."/>
            <person name="Ryder C.D."/>
            <person name="Edwards K."/>
            <person name="King G.J."/>
        </authorList>
    </citation>
    <scope>NUCLEOTIDE SEQUENCE [GENOMIC DNA]</scope>
</reference>